<organism>
    <name type="scientific">Mus musculus</name>
    <name type="common">Mouse</name>
    <dbReference type="NCBI Taxonomy" id="10090"/>
    <lineage>
        <taxon>Eukaryota</taxon>
        <taxon>Metazoa</taxon>
        <taxon>Chordata</taxon>
        <taxon>Craniata</taxon>
        <taxon>Vertebrata</taxon>
        <taxon>Euteleostomi</taxon>
        <taxon>Mammalia</taxon>
        <taxon>Eutheria</taxon>
        <taxon>Euarchontoglires</taxon>
        <taxon>Glires</taxon>
        <taxon>Rodentia</taxon>
        <taxon>Myomorpha</taxon>
        <taxon>Muroidea</taxon>
        <taxon>Muridae</taxon>
        <taxon>Murinae</taxon>
        <taxon>Mus</taxon>
        <taxon>Mus</taxon>
    </lineage>
</organism>
<feature type="chain" id="PRO_0000355591" description="Keratin-associated protein 12-1">
    <location>
        <begin position="1"/>
        <end position="130"/>
    </location>
</feature>
<feature type="repeat" description="1" evidence="2">
    <location>
        <begin position="10"/>
        <end position="14"/>
    </location>
</feature>
<feature type="repeat" description="2" evidence="2">
    <location>
        <begin position="15"/>
        <end position="29"/>
    </location>
</feature>
<feature type="repeat" description="3" evidence="2">
    <location>
        <begin position="34"/>
        <end position="38"/>
    </location>
</feature>
<feature type="repeat" description="4" evidence="2">
    <location>
        <begin position="40"/>
        <end position="44"/>
    </location>
</feature>
<feature type="repeat" description="5" evidence="2">
    <location>
        <begin position="45"/>
        <end position="49"/>
    </location>
</feature>
<feature type="repeat" description="6" evidence="2">
    <location>
        <begin position="60"/>
        <end position="64"/>
    </location>
</feature>
<feature type="repeat" description="7" evidence="2">
    <location>
        <begin position="85"/>
        <end position="89"/>
    </location>
</feature>
<feature type="repeat" description="8" evidence="2">
    <location>
        <begin position="90"/>
        <end position="94"/>
    </location>
</feature>
<feature type="repeat" description="9" evidence="2">
    <location>
        <begin position="95"/>
        <end position="99"/>
    </location>
</feature>
<feature type="repeat" description="10" evidence="2">
    <location>
        <begin position="104"/>
        <end position="108"/>
    </location>
</feature>
<feature type="repeat" description="11" evidence="2">
    <location>
        <begin position="109"/>
        <end position="113"/>
    </location>
</feature>
<feature type="repeat" description="12" evidence="2">
    <location>
        <begin position="114"/>
        <end position="118"/>
    </location>
</feature>
<feature type="repeat" description="13" evidence="2">
    <location>
        <begin position="119"/>
        <end position="123"/>
    </location>
</feature>
<feature type="repeat" description="14" evidence="2">
    <location>
        <begin position="124"/>
        <end position="128"/>
    </location>
</feature>
<feature type="region of interest" description="14 X 5 AA approximate repeats" evidence="2">
    <location>
        <begin position="10"/>
        <end position="128"/>
    </location>
</feature>
<sequence>MCHTSCSSGCQPSCCVSSSCQPSCCVSSPCQASCFVSSPCQPSCCVSSSCQSACCRPAICIPVRYQVACCVPVSCGPTVCMAPSCQSSVCVPVSCRPVCVTSSCQSSGCCQPSCPTLVCKPVTCSNPSCC</sequence>
<comment type="function">
    <text evidence="1">In the hair cortex, hair keratin intermediate filaments are embedded in an interfilamentous matrix, consisting of hair keratin-associated proteins (KRTAP), which are essential for the formation of a rigid and resistant hair shaft through their extensive disulfide bond cross-linking with abundant cysteine residues of hair keratins. The matrix proteins include the high-sulfur and high-glycine-tyrosine keratins (By similarity).</text>
</comment>
<comment type="subunit">
    <text evidence="1">Interacts with hair keratins.</text>
</comment>
<comment type="tissue specificity">
    <text evidence="3">Expressed only in the head and back skin of a 3 day old mouse. Not expressed in adult skin.</text>
</comment>
<comment type="similarity">
    <text evidence="2">Belongs to the KRTAP type 12 family.</text>
</comment>
<reference evidence="4 5" key="1">
    <citation type="journal article" date="1998" name="Genomics">
        <title>A cluster of keratin-associated proteins on mouse chromosome 10 in the region of conserved linkage with human chromosome 21.</title>
        <authorList>
            <person name="Cole S.E."/>
            <person name="Reeves R.H."/>
        </authorList>
    </citation>
    <scope>NUCLEOTIDE SEQUENCE [GENOMIC DNA]</scope>
    <scope>TISSUE SPECIFICITY</scope>
</reference>
<reference key="2">
    <citation type="submission" date="2005-09" db="EMBL/GenBank/DDBJ databases">
        <authorList>
            <person name="Mural R.J."/>
            <person name="Istrail S."/>
            <person name="Sutton G.G."/>
            <person name="Florea L."/>
            <person name="Halpern A.L."/>
            <person name="Mobarry C.M."/>
            <person name="Lippert R."/>
            <person name="Walenz B."/>
            <person name="Shatkay H."/>
            <person name="Dew I."/>
            <person name="Miller J.R."/>
            <person name="Flanigan M.J."/>
            <person name="Edwards N.J."/>
            <person name="Bolanos R."/>
            <person name="Fasulo D."/>
            <person name="Halldorsson B.V."/>
            <person name="Hannenhalli S."/>
            <person name="Turner R."/>
            <person name="Yooseph S."/>
            <person name="Lu F."/>
            <person name="Nusskern D.R."/>
            <person name="Shue B.C."/>
            <person name="Zheng X.H."/>
            <person name="Zhong F."/>
            <person name="Delcher A.L."/>
            <person name="Huson D.H."/>
            <person name="Kravitz S.A."/>
            <person name="Mouchard L."/>
            <person name="Reinert K."/>
            <person name="Remington K.A."/>
            <person name="Clark A.G."/>
            <person name="Waterman M.S."/>
            <person name="Eichler E.E."/>
            <person name="Adams M.D."/>
            <person name="Hunkapiller M.W."/>
            <person name="Myers E.W."/>
            <person name="Venter J.C."/>
        </authorList>
    </citation>
    <scope>NUCLEOTIDE SEQUENCE [LARGE SCALE GENOMIC DNA]</scope>
</reference>
<reference evidence="6" key="3">
    <citation type="journal article" date="2004" name="Genome Res.">
        <title>The status, quality, and expansion of the NIH full-length cDNA project: the Mammalian Gene Collection (MGC).</title>
        <authorList>
            <consortium name="The MGC Project Team"/>
        </authorList>
    </citation>
    <scope>NUCLEOTIDE SEQUENCE [LARGE SCALE MRNA]</scope>
</reference>
<protein>
    <recommendedName>
        <fullName evidence="1 5">Keratin-associated protein 12-1</fullName>
    </recommendedName>
</protein>
<evidence type="ECO:0000250" key="1">
    <source>
        <dbReference type="UniProtKB" id="P59990"/>
    </source>
</evidence>
<evidence type="ECO:0000255" key="2"/>
<evidence type="ECO:0000269" key="3">
    <source>
    </source>
</evidence>
<evidence type="ECO:0000305" key="4"/>
<evidence type="ECO:0000312" key="5">
    <source>
        <dbReference type="EMBL" id="AAD11776.1"/>
    </source>
</evidence>
<evidence type="ECO:0000312" key="6">
    <source>
        <dbReference type="EMBL" id="AAI07320.1"/>
    </source>
</evidence>
<evidence type="ECO:0000312" key="7">
    <source>
        <dbReference type="MGI" id="MGI:1328315"/>
    </source>
</evidence>
<accession>Q9Z287</accession>
<keyword id="KW-0416">Keratin</keyword>
<keyword id="KW-1185">Reference proteome</keyword>
<keyword id="KW-0677">Repeat</keyword>
<dbReference type="EMBL" id="AF081797">
    <property type="protein sequence ID" value="AAD11776.1"/>
    <property type="molecule type" value="Genomic_DNA"/>
</dbReference>
<dbReference type="EMBL" id="CH466553">
    <property type="protein sequence ID" value="EDL31791.1"/>
    <property type="molecule type" value="Genomic_DNA"/>
</dbReference>
<dbReference type="EMBL" id="BC107319">
    <property type="protein sequence ID" value="AAI07320.1"/>
    <property type="molecule type" value="mRNA"/>
</dbReference>
<dbReference type="EMBL" id="BC107320">
    <property type="protein sequence ID" value="AAI07321.1"/>
    <property type="molecule type" value="mRNA"/>
</dbReference>
<dbReference type="CCDS" id="CCDS23959.1"/>
<dbReference type="RefSeq" id="NP_034800.1">
    <property type="nucleotide sequence ID" value="NM_010670.1"/>
</dbReference>
<dbReference type="STRING" id="10090.ENSMUSP00000074876"/>
<dbReference type="GlyGen" id="Q9Z287">
    <property type="glycosylation" value="1 site"/>
</dbReference>
<dbReference type="PaxDb" id="10090-ENSMUSP00000074876"/>
<dbReference type="DNASU" id="16694"/>
<dbReference type="Ensembl" id="ENSMUST00000092370.3">
    <property type="protein sequence ID" value="ENSMUSP00000090024.2"/>
    <property type="gene ID" value="ENSMUSG00000069583.3"/>
</dbReference>
<dbReference type="GeneID" id="16694"/>
<dbReference type="KEGG" id="mmu:16694"/>
<dbReference type="UCSC" id="uc007fwc.1">
    <property type="organism name" value="mouse"/>
</dbReference>
<dbReference type="AGR" id="MGI:1328315"/>
<dbReference type="CTD" id="353332"/>
<dbReference type="MGI" id="MGI:1328315">
    <property type="gene designation" value="Krtap12-1"/>
</dbReference>
<dbReference type="VEuPathDB" id="HostDB:ENSMUSG00000069583"/>
<dbReference type="eggNOG" id="KOG4726">
    <property type="taxonomic scope" value="Eukaryota"/>
</dbReference>
<dbReference type="GeneTree" id="ENSGT00940000161526"/>
<dbReference type="HOGENOM" id="CLU_138013_0_0_1"/>
<dbReference type="InParanoid" id="Q9Z287"/>
<dbReference type="OMA" id="SCQSARF"/>
<dbReference type="PhylomeDB" id="Q9Z287"/>
<dbReference type="TreeFam" id="TF339135"/>
<dbReference type="Reactome" id="R-MMU-6805567">
    <property type="pathway name" value="Keratinization"/>
</dbReference>
<dbReference type="BioGRID-ORCS" id="16694">
    <property type="hits" value="2 hits in 76 CRISPR screens"/>
</dbReference>
<dbReference type="PRO" id="PR:Q9Z287"/>
<dbReference type="Proteomes" id="UP000000589">
    <property type="component" value="Chromosome 10"/>
</dbReference>
<dbReference type="RNAct" id="Q9Z287">
    <property type="molecule type" value="protein"/>
</dbReference>
<dbReference type="Bgee" id="ENSMUSG00000069583">
    <property type="expression patterns" value="Expressed in lip and 26 other cell types or tissues"/>
</dbReference>
<dbReference type="GO" id="GO:0005829">
    <property type="term" value="C:cytosol"/>
    <property type="evidence" value="ECO:0007669"/>
    <property type="project" value="UniProtKB-ARBA"/>
</dbReference>
<dbReference type="GO" id="GO:0045095">
    <property type="term" value="C:keratin filament"/>
    <property type="evidence" value="ECO:0007669"/>
    <property type="project" value="InterPro"/>
</dbReference>
<dbReference type="InterPro" id="IPR002494">
    <property type="entry name" value="KAP"/>
</dbReference>
<dbReference type="Pfam" id="PF13885">
    <property type="entry name" value="Keratin_B2_2"/>
    <property type="match status" value="2"/>
</dbReference>
<proteinExistence type="evidence at transcript level"/>
<name>KR121_MOUSE</name>
<gene>
    <name evidence="7" type="primary">Krtap12-1</name>
</gene>